<evidence type="ECO:0000250" key="1">
    <source>
        <dbReference type="UniProtKB" id="Q13111"/>
    </source>
</evidence>
<evidence type="ECO:0000250" key="2">
    <source>
        <dbReference type="UniProtKB" id="Q5R1T0"/>
    </source>
</evidence>
<evidence type="ECO:0000256" key="3">
    <source>
        <dbReference type="SAM" id="MobiDB-lite"/>
    </source>
</evidence>
<evidence type="ECO:0000269" key="4">
    <source>
    </source>
</evidence>
<evidence type="ECO:0000305" key="5"/>
<keyword id="KW-0131">Cell cycle</keyword>
<keyword id="KW-0143">Chaperone</keyword>
<keyword id="KW-0156">Chromatin regulator</keyword>
<keyword id="KW-0227">DNA damage</keyword>
<keyword id="KW-0234">DNA repair</keyword>
<keyword id="KW-0235">DNA replication</keyword>
<keyword id="KW-0539">Nucleus</keyword>
<keyword id="KW-0597">Phosphoprotein</keyword>
<keyword id="KW-1185">Reference proteome</keyword>
<reference key="1">
    <citation type="journal article" date="2013" name="Nature">
        <title>The zebrafish reference genome sequence and its relationship to the human genome.</title>
        <authorList>
            <person name="Howe K."/>
            <person name="Clark M.D."/>
            <person name="Torroja C.F."/>
            <person name="Torrance J."/>
            <person name="Berthelot C."/>
            <person name="Muffato M."/>
            <person name="Collins J.E."/>
            <person name="Humphray S."/>
            <person name="McLaren K."/>
            <person name="Matthews L."/>
            <person name="McLaren S."/>
            <person name="Sealy I."/>
            <person name="Caccamo M."/>
            <person name="Churcher C."/>
            <person name="Scott C."/>
            <person name="Barrett J.C."/>
            <person name="Koch R."/>
            <person name="Rauch G.J."/>
            <person name="White S."/>
            <person name="Chow W."/>
            <person name="Kilian B."/>
            <person name="Quintais L.T."/>
            <person name="Guerra-Assuncao J.A."/>
            <person name="Zhou Y."/>
            <person name="Gu Y."/>
            <person name="Yen J."/>
            <person name="Vogel J.H."/>
            <person name="Eyre T."/>
            <person name="Redmond S."/>
            <person name="Banerjee R."/>
            <person name="Chi J."/>
            <person name="Fu B."/>
            <person name="Langley E."/>
            <person name="Maguire S.F."/>
            <person name="Laird G.K."/>
            <person name="Lloyd D."/>
            <person name="Kenyon E."/>
            <person name="Donaldson S."/>
            <person name="Sehra H."/>
            <person name="Almeida-King J."/>
            <person name="Loveland J."/>
            <person name="Trevanion S."/>
            <person name="Jones M."/>
            <person name="Quail M."/>
            <person name="Willey D."/>
            <person name="Hunt A."/>
            <person name="Burton J."/>
            <person name="Sims S."/>
            <person name="McLay K."/>
            <person name="Plumb B."/>
            <person name="Davis J."/>
            <person name="Clee C."/>
            <person name="Oliver K."/>
            <person name="Clark R."/>
            <person name="Riddle C."/>
            <person name="Elliot D."/>
            <person name="Threadgold G."/>
            <person name="Harden G."/>
            <person name="Ware D."/>
            <person name="Begum S."/>
            <person name="Mortimore B."/>
            <person name="Kerry G."/>
            <person name="Heath P."/>
            <person name="Phillimore B."/>
            <person name="Tracey A."/>
            <person name="Corby N."/>
            <person name="Dunn M."/>
            <person name="Johnson C."/>
            <person name="Wood J."/>
            <person name="Clark S."/>
            <person name="Pelan S."/>
            <person name="Griffiths G."/>
            <person name="Smith M."/>
            <person name="Glithero R."/>
            <person name="Howden P."/>
            <person name="Barker N."/>
            <person name="Lloyd C."/>
            <person name="Stevens C."/>
            <person name="Harley J."/>
            <person name="Holt K."/>
            <person name="Panagiotidis G."/>
            <person name="Lovell J."/>
            <person name="Beasley H."/>
            <person name="Henderson C."/>
            <person name="Gordon D."/>
            <person name="Auger K."/>
            <person name="Wright D."/>
            <person name="Collins J."/>
            <person name="Raisen C."/>
            <person name="Dyer L."/>
            <person name="Leung K."/>
            <person name="Robertson L."/>
            <person name="Ambridge K."/>
            <person name="Leongamornlert D."/>
            <person name="McGuire S."/>
            <person name="Gilderthorp R."/>
            <person name="Griffiths C."/>
            <person name="Manthravadi D."/>
            <person name="Nichol S."/>
            <person name="Barker G."/>
            <person name="Whitehead S."/>
            <person name="Kay M."/>
            <person name="Brown J."/>
            <person name="Murnane C."/>
            <person name="Gray E."/>
            <person name="Humphries M."/>
            <person name="Sycamore N."/>
            <person name="Barker D."/>
            <person name="Saunders D."/>
            <person name="Wallis J."/>
            <person name="Babbage A."/>
            <person name="Hammond S."/>
            <person name="Mashreghi-Mohammadi M."/>
            <person name="Barr L."/>
            <person name="Martin S."/>
            <person name="Wray P."/>
            <person name="Ellington A."/>
            <person name="Matthews N."/>
            <person name="Ellwood M."/>
            <person name="Woodmansey R."/>
            <person name="Clark G."/>
            <person name="Cooper J."/>
            <person name="Tromans A."/>
            <person name="Grafham D."/>
            <person name="Skuce C."/>
            <person name="Pandian R."/>
            <person name="Andrews R."/>
            <person name="Harrison E."/>
            <person name="Kimberley A."/>
            <person name="Garnett J."/>
            <person name="Fosker N."/>
            <person name="Hall R."/>
            <person name="Garner P."/>
            <person name="Kelly D."/>
            <person name="Bird C."/>
            <person name="Palmer S."/>
            <person name="Gehring I."/>
            <person name="Berger A."/>
            <person name="Dooley C.M."/>
            <person name="Ersan-Urun Z."/>
            <person name="Eser C."/>
            <person name="Geiger H."/>
            <person name="Geisler M."/>
            <person name="Karotki L."/>
            <person name="Kirn A."/>
            <person name="Konantz J."/>
            <person name="Konantz M."/>
            <person name="Oberlander M."/>
            <person name="Rudolph-Geiger S."/>
            <person name="Teucke M."/>
            <person name="Lanz C."/>
            <person name="Raddatz G."/>
            <person name="Osoegawa K."/>
            <person name="Zhu B."/>
            <person name="Rapp A."/>
            <person name="Widaa S."/>
            <person name="Langford C."/>
            <person name="Yang F."/>
            <person name="Schuster S.C."/>
            <person name="Carter N.P."/>
            <person name="Harrow J."/>
            <person name="Ning Z."/>
            <person name="Herrero J."/>
            <person name="Searle S.M."/>
            <person name="Enright A."/>
            <person name="Geisler R."/>
            <person name="Plasterk R.H."/>
            <person name="Lee C."/>
            <person name="Westerfield M."/>
            <person name="de Jong P.J."/>
            <person name="Zon L.I."/>
            <person name="Postlethwait J.H."/>
            <person name="Nusslein-Volhard C."/>
            <person name="Hubbard T.J."/>
            <person name="Roest Crollius H."/>
            <person name="Rogers J."/>
            <person name="Stemple D.L."/>
        </authorList>
    </citation>
    <scope>NUCLEOTIDE SEQUENCE [LARGE SCALE GENOMIC DNA]</scope>
    <source>
        <strain>Tuebingen</strain>
    </source>
</reference>
<reference key="2">
    <citation type="submission" date="2006-10" db="EMBL/GenBank/DDBJ databases">
        <authorList>
            <consortium name="NIH - Zebrafish Gene Collection (ZGC) project"/>
        </authorList>
    </citation>
    <scope>NUCLEOTIDE SEQUENCE [LARGE SCALE MRNA]</scope>
</reference>
<reference key="3">
    <citation type="journal article" date="2008" name="J. Proteome Res.">
        <title>Online automated in vivo zebrafish phosphoproteomics: from large-scale analysis down to a single embryo.</title>
        <authorList>
            <person name="Lemeer S."/>
            <person name="Pinkse M.W.H."/>
            <person name="Mohammed S."/>
            <person name="van Breukelen B."/>
            <person name="den Hertog J."/>
            <person name="Slijper M."/>
            <person name="Heck A.J.R."/>
        </authorList>
    </citation>
    <scope>PHOSPHORYLATION [LARGE SCALE ANALYSIS] AT THR-111 AND SER-118</scope>
    <scope>IDENTIFICATION BY MASS SPECTROMETRY</scope>
    <source>
        <tissue>Embryo</tissue>
    </source>
</reference>
<name>CAF1A_DANRE</name>
<gene>
    <name type="primary">chaf1a</name>
    <name type="synonym">caip150</name>
    <name type="ORF">ch211-129c21.3</name>
    <name type="ORF">zgc:153930</name>
</gene>
<organism>
    <name type="scientific">Danio rerio</name>
    <name type="common">Zebrafish</name>
    <name type="synonym">Brachydanio rerio</name>
    <dbReference type="NCBI Taxonomy" id="7955"/>
    <lineage>
        <taxon>Eukaryota</taxon>
        <taxon>Metazoa</taxon>
        <taxon>Chordata</taxon>
        <taxon>Craniata</taxon>
        <taxon>Vertebrata</taxon>
        <taxon>Euteleostomi</taxon>
        <taxon>Actinopterygii</taxon>
        <taxon>Neopterygii</taxon>
        <taxon>Teleostei</taxon>
        <taxon>Ostariophysi</taxon>
        <taxon>Cypriniformes</taxon>
        <taxon>Danionidae</taxon>
        <taxon>Danioninae</taxon>
        <taxon>Danio</taxon>
    </lineage>
</organism>
<feature type="chain" id="PRO_0000373883" description="Chromatin assembly factor 1 subunit A">
    <location>
        <begin position="1"/>
        <end position="863"/>
    </location>
</feature>
<feature type="region of interest" description="Disordered" evidence="3">
    <location>
        <begin position="1"/>
        <end position="353"/>
    </location>
</feature>
<feature type="region of interest" description="Disordered" evidence="3">
    <location>
        <begin position="423"/>
        <end position="466"/>
    </location>
</feature>
<feature type="region of interest" description="Disordered" evidence="3">
    <location>
        <begin position="513"/>
        <end position="579"/>
    </location>
</feature>
<feature type="region of interest" description="Disordered" evidence="3">
    <location>
        <begin position="749"/>
        <end position="863"/>
    </location>
</feature>
<feature type="compositionally biased region" description="Basic and acidic residues" evidence="3">
    <location>
        <begin position="42"/>
        <end position="54"/>
    </location>
</feature>
<feature type="compositionally biased region" description="Low complexity" evidence="3">
    <location>
        <begin position="144"/>
        <end position="154"/>
    </location>
</feature>
<feature type="compositionally biased region" description="Acidic residues" evidence="3">
    <location>
        <begin position="155"/>
        <end position="168"/>
    </location>
</feature>
<feature type="compositionally biased region" description="Acidic residues" evidence="3">
    <location>
        <begin position="177"/>
        <end position="196"/>
    </location>
</feature>
<feature type="compositionally biased region" description="Low complexity" evidence="3">
    <location>
        <begin position="205"/>
        <end position="237"/>
    </location>
</feature>
<feature type="compositionally biased region" description="Basic and acidic residues" evidence="3">
    <location>
        <begin position="254"/>
        <end position="353"/>
    </location>
</feature>
<feature type="compositionally biased region" description="Basic and acidic residues" evidence="3">
    <location>
        <begin position="457"/>
        <end position="466"/>
    </location>
</feature>
<feature type="compositionally biased region" description="Acidic residues" evidence="3">
    <location>
        <begin position="513"/>
        <end position="524"/>
    </location>
</feature>
<feature type="compositionally biased region" description="Acidic residues" evidence="3">
    <location>
        <begin position="532"/>
        <end position="547"/>
    </location>
</feature>
<feature type="compositionally biased region" description="Basic and acidic residues" evidence="3">
    <location>
        <begin position="569"/>
        <end position="579"/>
    </location>
</feature>
<feature type="compositionally biased region" description="Low complexity" evidence="3">
    <location>
        <begin position="760"/>
        <end position="771"/>
    </location>
</feature>
<feature type="compositionally biased region" description="Acidic residues" evidence="3">
    <location>
        <begin position="806"/>
        <end position="815"/>
    </location>
</feature>
<feature type="compositionally biased region" description="Polar residues" evidence="3">
    <location>
        <begin position="821"/>
        <end position="835"/>
    </location>
</feature>
<feature type="compositionally biased region" description="Low complexity" evidence="3">
    <location>
        <begin position="850"/>
        <end position="863"/>
    </location>
</feature>
<feature type="modified residue" description="Phosphothreonine" evidence="4">
    <location>
        <position position="111"/>
    </location>
</feature>
<feature type="modified residue" description="Phosphoserine" evidence="4">
    <location>
        <position position="118"/>
    </location>
</feature>
<feature type="sequence conflict" description="In Ref. 1; CAK04065." evidence="5" ref="1">
    <location>
        <begin position="146"/>
        <end position="210"/>
    </location>
</feature>
<protein>
    <recommendedName>
        <fullName>Chromatin assembly factor 1 subunit A</fullName>
        <shortName>CAF-1 subunit A</shortName>
    </recommendedName>
    <alternativeName>
        <fullName>Chromatin assembly factor I p150 subunit</fullName>
        <shortName>CAF-I 150 kDa subunit</shortName>
        <shortName>CAF-I p150</shortName>
    </alternativeName>
</protein>
<sequence>MVVVMLAAEEPLASTPRRDMDCVGKANTNKKLVQARLPFKRLNPEPKECNEPKRTKGPVAPKCSEPSDQENDQDSSSISHHGPALVNGRGPLDCFMSRRKRSPLRSAPEATIDLTEDSNDSAKQQPAPPIAATCPLSEEKTKTSEGTTEPTIPLTEEETEKDEAEDVDALPLLDITQDSDTEEEEEEEEEEEEQQQEAEVSHGNESVLSTGSTSSASVIASSPEPSKSAPTTPASTSRINAANKVKRRSLKSVQEQEEKQRQRDEKERLKQEAKAAKEKKKEEARKMKEEKEREKKEKKEKDEKERREKKERDEKEKADKLKAKEEQRQMKIEAKLEEKRKKEEEKRLKEEKDRIKAEKAEITRFLQKPKTQLAPKTLASACGKFAPFEIKAHMSLAPLTRVQCEDSVLEDLDRYLAQPDSTLNGLKDWTGHKPRSSGPTRPRHSAQGDCVVITESQKADDGPDRSRYGRMKLLHFHDNYRPAYWGTWSKKSTHISPRCPLRLDKDLLDYEVDSDEEWEEEEPGESLSHSEGDDDDEAGEDDDDDDGFFVPHGYLSEGEGALEDEEGGDPEKQKVRQRMKAREWENELMSKGKVKVLEAVVRGCFWEGEKPLPDFLQPYAVCMLEPLSKDEASTPEQDASRQQRNEKLLTMLLPLLHGNVNSNKVIITEFLEFCRQQTSSPTESLLNTTESIPPRIHVRRIIKENAVYEKRSTFKRCCWYVHADVLARYSQEALPVPCQWSYLTSGANVTRDEHSGSQGNSPTTNSSTTPSNKRKSASSHSITKYMKKCGESEQTEAMETDGFQADTEDDEDDDCIIIGEQSGSSEQDINTSLPQTDRETEPMDTSASETAALALPCPTPATA</sequence>
<comment type="function">
    <text evidence="2">Acts as a component of the histone chaperone complex chromatin assembly factor 1 (CAF-1), which assembles histone octamers onto DNA during replication and repair. CAF-1 performs the first step of the nucleosome assembly process, bringing newly synthesized histones H3 and H4 to replicating DNA; histones H2A/H2B can bind to this chromatin precursor subsequent to DNA replication to complete the histone octamer.</text>
</comment>
<comment type="subcellular location">
    <subcellularLocation>
        <location evidence="1">Nucleus</location>
    </subcellularLocation>
    <text evidence="1">DNA replication foci.</text>
</comment>
<comment type="similarity">
    <text evidence="5">Belongs to the CHAF1A family.</text>
</comment>
<accession>A0JMK9</accession>
<accession>Q1LYI1</accession>
<dbReference type="EMBL" id="BX005201">
    <property type="protein sequence ID" value="CAK04065.1"/>
    <property type="molecule type" value="Genomic_DNA"/>
</dbReference>
<dbReference type="EMBL" id="BC125916">
    <property type="protein sequence ID" value="AAI25917.1"/>
    <property type="molecule type" value="mRNA"/>
</dbReference>
<dbReference type="RefSeq" id="NP_001038478.2">
    <property type="nucleotide sequence ID" value="NM_001045013.2"/>
</dbReference>
<dbReference type="SMR" id="A0JMK9"/>
<dbReference type="FunCoup" id="A0JMK9">
    <property type="interactions" value="2017"/>
</dbReference>
<dbReference type="STRING" id="7955.ENSDARP00000101598"/>
<dbReference type="iPTMnet" id="A0JMK9"/>
<dbReference type="PaxDb" id="7955-ENSDARP00000101598"/>
<dbReference type="PeptideAtlas" id="A0JMK9"/>
<dbReference type="Ensembl" id="ENSDART00000111711">
    <property type="protein sequence ID" value="ENSDARP00000101598"/>
    <property type="gene ID" value="ENSDARG00000062152"/>
</dbReference>
<dbReference type="GeneID" id="563212"/>
<dbReference type="KEGG" id="dre:563212"/>
<dbReference type="AGR" id="ZFIN:ZDB-GENE-030131-5366"/>
<dbReference type="CTD" id="10036"/>
<dbReference type="ZFIN" id="ZDB-GENE-030131-5366">
    <property type="gene designation" value="chaf1a"/>
</dbReference>
<dbReference type="eggNOG" id="KOG4364">
    <property type="taxonomic scope" value="Eukaryota"/>
</dbReference>
<dbReference type="InParanoid" id="A0JMK9"/>
<dbReference type="OMA" id="DPWAQDK"/>
<dbReference type="OrthoDB" id="79480at2759"/>
<dbReference type="PhylomeDB" id="A0JMK9"/>
<dbReference type="TreeFam" id="TF350377"/>
<dbReference type="PRO" id="PR:A0JMK9"/>
<dbReference type="Proteomes" id="UP000000437">
    <property type="component" value="Alternate scaffold 22"/>
</dbReference>
<dbReference type="Proteomes" id="UP000000437">
    <property type="component" value="Chromosome 22"/>
</dbReference>
<dbReference type="Bgee" id="ENSDARG00000062152">
    <property type="expression patterns" value="Expressed in blastula and 22 other cell types or tissues"/>
</dbReference>
<dbReference type="ExpressionAtlas" id="A0JMK9">
    <property type="expression patterns" value="baseline and differential"/>
</dbReference>
<dbReference type="GO" id="GO:0033186">
    <property type="term" value="C:CAF-1 complex"/>
    <property type="evidence" value="ECO:0000250"/>
    <property type="project" value="UniProtKB"/>
</dbReference>
<dbReference type="GO" id="GO:0005634">
    <property type="term" value="C:nucleus"/>
    <property type="evidence" value="ECO:0000318"/>
    <property type="project" value="GO_Central"/>
</dbReference>
<dbReference type="GO" id="GO:0006281">
    <property type="term" value="P:DNA repair"/>
    <property type="evidence" value="ECO:0007669"/>
    <property type="project" value="UniProtKB-KW"/>
</dbReference>
<dbReference type="GO" id="GO:0006260">
    <property type="term" value="P:DNA replication"/>
    <property type="evidence" value="ECO:0007669"/>
    <property type="project" value="UniProtKB-KW"/>
</dbReference>
<dbReference type="GO" id="GO:0006335">
    <property type="term" value="P:DNA replication-dependent chromatin assembly"/>
    <property type="evidence" value="ECO:0000250"/>
    <property type="project" value="UniProtKB"/>
</dbReference>
<dbReference type="GO" id="GO:0006334">
    <property type="term" value="P:nucleosome assembly"/>
    <property type="evidence" value="ECO:0000318"/>
    <property type="project" value="GO_Central"/>
</dbReference>
<dbReference type="InterPro" id="IPR021644">
    <property type="entry name" value="CAF-1_p150_acidic"/>
</dbReference>
<dbReference type="InterPro" id="IPR029105">
    <property type="entry name" value="CAF1-p150_C2"/>
</dbReference>
<dbReference type="InterPro" id="IPR029091">
    <property type="entry name" value="CAF1_p150_N"/>
</dbReference>
<dbReference type="InterPro" id="IPR022043">
    <property type="entry name" value="CAF1A_DD"/>
</dbReference>
<dbReference type="PANTHER" id="PTHR15272:SF0">
    <property type="entry name" value="CHROMATIN ASSEMBLY FACTOR 1 SUBUNIT A"/>
    <property type="match status" value="1"/>
</dbReference>
<dbReference type="PANTHER" id="PTHR15272">
    <property type="entry name" value="CHROMATIN ASSEMBLY FACTOR 1 SUBUNIT A CAF-1 SUBUNIT A"/>
    <property type="match status" value="1"/>
</dbReference>
<dbReference type="Pfam" id="PF15539">
    <property type="entry name" value="CAF1-p150_C2"/>
    <property type="match status" value="1"/>
</dbReference>
<dbReference type="Pfam" id="PF15557">
    <property type="entry name" value="CAF1-p150_N"/>
    <property type="match status" value="1"/>
</dbReference>
<dbReference type="Pfam" id="PF11600">
    <property type="entry name" value="CAF1A_acidic"/>
    <property type="match status" value="1"/>
</dbReference>
<dbReference type="Pfam" id="PF12253">
    <property type="entry name" value="CAF1A_dimeriz"/>
    <property type="match status" value="1"/>
</dbReference>
<proteinExistence type="evidence at protein level"/>